<keyword id="KW-1185">Reference proteome</keyword>
<keyword id="KW-0687">Ribonucleoprotein</keyword>
<keyword id="KW-0689">Ribosomal protein</keyword>
<keyword id="KW-0694">RNA-binding</keyword>
<keyword id="KW-0699">rRNA-binding</keyword>
<reference key="1">
    <citation type="journal article" date="2002" name="Genome Res.">
        <title>The genome of Methanosarcina acetivorans reveals extensive metabolic and physiological diversity.</title>
        <authorList>
            <person name="Galagan J.E."/>
            <person name="Nusbaum C."/>
            <person name="Roy A."/>
            <person name="Endrizzi M.G."/>
            <person name="Macdonald P."/>
            <person name="FitzHugh W."/>
            <person name="Calvo S."/>
            <person name="Engels R."/>
            <person name="Smirnov S."/>
            <person name="Atnoor D."/>
            <person name="Brown A."/>
            <person name="Allen N."/>
            <person name="Naylor J."/>
            <person name="Stange-Thomann N."/>
            <person name="DeArellano K."/>
            <person name="Johnson R."/>
            <person name="Linton L."/>
            <person name="McEwan P."/>
            <person name="McKernan K."/>
            <person name="Talamas J."/>
            <person name="Tirrell A."/>
            <person name="Ye W."/>
            <person name="Zimmer A."/>
            <person name="Barber R.D."/>
            <person name="Cann I."/>
            <person name="Graham D.E."/>
            <person name="Grahame D.A."/>
            <person name="Guss A.M."/>
            <person name="Hedderich R."/>
            <person name="Ingram-Smith C."/>
            <person name="Kuettner H.C."/>
            <person name="Krzycki J.A."/>
            <person name="Leigh J.A."/>
            <person name="Li W."/>
            <person name="Liu J."/>
            <person name="Mukhopadhyay B."/>
            <person name="Reeve J.N."/>
            <person name="Smith K."/>
            <person name="Springer T.A."/>
            <person name="Umayam L.A."/>
            <person name="White O."/>
            <person name="White R.H."/>
            <person name="de Macario E.C."/>
            <person name="Ferry J.G."/>
            <person name="Jarrell K.F."/>
            <person name="Jing H."/>
            <person name="Macario A.J.L."/>
            <person name="Paulsen I.T."/>
            <person name="Pritchett M."/>
            <person name="Sowers K.R."/>
            <person name="Swanson R.V."/>
            <person name="Zinder S.H."/>
            <person name="Lander E."/>
            <person name="Metcalf W.W."/>
            <person name="Birren B."/>
        </authorList>
    </citation>
    <scope>NUCLEOTIDE SEQUENCE [LARGE SCALE GENOMIC DNA]</scope>
    <source>
        <strain>ATCC 35395 / DSM 2834 / JCM 12185 / C2A</strain>
    </source>
</reference>
<name>RS19_METAC</name>
<feature type="chain" id="PRO_0000130001" description="Small ribosomal subunit protein uS19">
    <location>
        <begin position="1"/>
        <end position="136"/>
    </location>
</feature>
<feature type="region of interest" description="Disordered" evidence="2">
    <location>
        <begin position="114"/>
        <end position="136"/>
    </location>
</feature>
<proteinExistence type="inferred from homology"/>
<evidence type="ECO:0000255" key="1">
    <source>
        <dbReference type="HAMAP-Rule" id="MF_00531"/>
    </source>
</evidence>
<evidence type="ECO:0000256" key="2">
    <source>
        <dbReference type="SAM" id="MobiDB-lite"/>
    </source>
</evidence>
<evidence type="ECO:0000305" key="3"/>
<dbReference type="EMBL" id="AE010299">
    <property type="protein sequence ID" value="AAM04501.1"/>
    <property type="molecule type" value="Genomic_DNA"/>
</dbReference>
<dbReference type="RefSeq" id="WP_011021105.1">
    <property type="nucleotide sequence ID" value="NC_003552.1"/>
</dbReference>
<dbReference type="SMR" id="Q8TRU3"/>
<dbReference type="FunCoup" id="Q8TRU3">
    <property type="interactions" value="138"/>
</dbReference>
<dbReference type="STRING" id="188937.MA_1076"/>
<dbReference type="EnsemblBacteria" id="AAM04501">
    <property type="protein sequence ID" value="AAM04501"/>
    <property type="gene ID" value="MA_1076"/>
</dbReference>
<dbReference type="GeneID" id="1472966"/>
<dbReference type="KEGG" id="mac:MA_1076"/>
<dbReference type="HOGENOM" id="CLU_097347_1_1_2"/>
<dbReference type="InParanoid" id="Q8TRU3"/>
<dbReference type="OrthoDB" id="30559at2157"/>
<dbReference type="PhylomeDB" id="Q8TRU3"/>
<dbReference type="Proteomes" id="UP000002487">
    <property type="component" value="Chromosome"/>
</dbReference>
<dbReference type="GO" id="GO:0022627">
    <property type="term" value="C:cytosolic small ribosomal subunit"/>
    <property type="evidence" value="ECO:0000318"/>
    <property type="project" value="GO_Central"/>
</dbReference>
<dbReference type="GO" id="GO:0019843">
    <property type="term" value="F:rRNA binding"/>
    <property type="evidence" value="ECO:0007669"/>
    <property type="project" value="UniProtKB-UniRule"/>
</dbReference>
<dbReference type="GO" id="GO:0003735">
    <property type="term" value="F:structural constituent of ribosome"/>
    <property type="evidence" value="ECO:0000318"/>
    <property type="project" value="GO_Central"/>
</dbReference>
<dbReference type="GO" id="GO:0000028">
    <property type="term" value="P:ribosomal small subunit assembly"/>
    <property type="evidence" value="ECO:0000318"/>
    <property type="project" value="GO_Central"/>
</dbReference>
<dbReference type="GO" id="GO:0006412">
    <property type="term" value="P:translation"/>
    <property type="evidence" value="ECO:0007669"/>
    <property type="project" value="UniProtKB-UniRule"/>
</dbReference>
<dbReference type="Gene3D" id="3.30.860.10">
    <property type="entry name" value="30s Ribosomal Protein S19, Chain A"/>
    <property type="match status" value="1"/>
</dbReference>
<dbReference type="HAMAP" id="MF_00531">
    <property type="entry name" value="Ribosomal_uS19"/>
    <property type="match status" value="1"/>
</dbReference>
<dbReference type="InterPro" id="IPR002222">
    <property type="entry name" value="Ribosomal_uS19"/>
</dbReference>
<dbReference type="InterPro" id="IPR020934">
    <property type="entry name" value="Ribosomal_uS19_CS"/>
</dbReference>
<dbReference type="InterPro" id="IPR005713">
    <property type="entry name" value="Ribosomal_uS19_euk/arc"/>
</dbReference>
<dbReference type="InterPro" id="IPR023575">
    <property type="entry name" value="Ribosomal_uS19_SF"/>
</dbReference>
<dbReference type="NCBIfam" id="NF003121">
    <property type="entry name" value="PRK04038.1"/>
    <property type="match status" value="1"/>
</dbReference>
<dbReference type="NCBIfam" id="TIGR01025">
    <property type="entry name" value="uS19_arch"/>
    <property type="match status" value="1"/>
</dbReference>
<dbReference type="PANTHER" id="PTHR11880">
    <property type="entry name" value="RIBOSOMAL PROTEIN S19P FAMILY MEMBER"/>
    <property type="match status" value="1"/>
</dbReference>
<dbReference type="PANTHER" id="PTHR11880:SF2">
    <property type="entry name" value="SMALL RIBOSOMAL SUBUNIT PROTEIN US19"/>
    <property type="match status" value="1"/>
</dbReference>
<dbReference type="Pfam" id="PF00203">
    <property type="entry name" value="Ribosomal_S19"/>
    <property type="match status" value="1"/>
</dbReference>
<dbReference type="PIRSF" id="PIRSF002144">
    <property type="entry name" value="Ribosomal_S19"/>
    <property type="match status" value="1"/>
</dbReference>
<dbReference type="PRINTS" id="PR00975">
    <property type="entry name" value="RIBOSOMALS19"/>
</dbReference>
<dbReference type="SUPFAM" id="SSF54570">
    <property type="entry name" value="Ribosomal protein S19"/>
    <property type="match status" value="1"/>
</dbReference>
<dbReference type="PROSITE" id="PS00323">
    <property type="entry name" value="RIBOSOMAL_S19"/>
    <property type="match status" value="1"/>
</dbReference>
<comment type="function">
    <text evidence="1">Protein S19 forms a complex with S13 that binds strongly to the 16S ribosomal RNA.</text>
</comment>
<comment type="similarity">
    <text evidence="1">Belongs to the universal ribosomal protein uS19 family.</text>
</comment>
<organism>
    <name type="scientific">Methanosarcina acetivorans (strain ATCC 35395 / DSM 2834 / JCM 12185 / C2A)</name>
    <dbReference type="NCBI Taxonomy" id="188937"/>
    <lineage>
        <taxon>Archaea</taxon>
        <taxon>Methanobacteriati</taxon>
        <taxon>Methanobacteriota</taxon>
        <taxon>Stenosarchaea group</taxon>
        <taxon>Methanomicrobia</taxon>
        <taxon>Methanosarcinales</taxon>
        <taxon>Methanosarcinaceae</taxon>
        <taxon>Methanosarcina</taxon>
    </lineage>
</organism>
<accession>Q8TRU3</accession>
<gene>
    <name evidence="1" type="primary">rps19</name>
    <name type="ordered locus">MA_1076</name>
</gene>
<sequence>MAKKSSSRLPKRKGEYTYRGKTVSELQELSLEEFAELLPSRERRSLKRGFTDGQKKVLHEFKEGKKIRTHHRDMIILPEMIGKTIEIHNGKGFVSVDLQPEMVGHRFGEFAPTRSRVSHGSAGVGATRSSKFVPLK</sequence>
<protein>
    <recommendedName>
        <fullName evidence="1">Small ribosomal subunit protein uS19</fullName>
    </recommendedName>
    <alternativeName>
        <fullName evidence="3">30S ribosomal protein S19</fullName>
    </alternativeName>
</protein>